<keyword id="KW-1015">Disulfide bond</keyword>
<keyword id="KW-0249">Electron transport</keyword>
<keyword id="KW-0676">Redox-active center</keyword>
<keyword id="KW-0813">Transport</keyword>
<sequence>MANNVMDSSFKKEVLESDLPVLVDFWAEWCGPCKMLTPIIDEISKELQGKVKVLKMNIDENPNTPSEYGIRSIPTIMLFKNGEQKDTKIGLQQKNSLLDWINKSI</sequence>
<organism>
    <name type="scientific">Rickettsia conorii (strain ATCC VR-613 / Malish 7)</name>
    <dbReference type="NCBI Taxonomy" id="272944"/>
    <lineage>
        <taxon>Bacteria</taxon>
        <taxon>Pseudomonadati</taxon>
        <taxon>Pseudomonadota</taxon>
        <taxon>Alphaproteobacteria</taxon>
        <taxon>Rickettsiales</taxon>
        <taxon>Rickettsiaceae</taxon>
        <taxon>Rickettsieae</taxon>
        <taxon>Rickettsia</taxon>
        <taxon>spotted fever group</taxon>
    </lineage>
</organism>
<name>THIO_RICCN</name>
<protein>
    <recommendedName>
        <fullName>Thioredoxin</fullName>
        <shortName>Trx</shortName>
    </recommendedName>
</protein>
<comment type="function">
    <text evidence="1">Component of the thioredoxin-thioredoxin reductase system. Participates in various redox reactions through the reversible oxidation of its active center dithiol to a disulfide and catalyzes dithiol-disulfide exchange reactions (By similarity).</text>
</comment>
<comment type="similarity">
    <text evidence="3">Belongs to the thioredoxin family.</text>
</comment>
<gene>
    <name type="primary">trxA</name>
    <name type="ordered locus">RC0002</name>
</gene>
<evidence type="ECO:0000250" key="1"/>
<evidence type="ECO:0000255" key="2">
    <source>
        <dbReference type="PROSITE-ProRule" id="PRU00691"/>
    </source>
</evidence>
<evidence type="ECO:0000305" key="3"/>
<accession>Q92JR5</accession>
<feature type="chain" id="PRO_0000120123" description="Thioredoxin">
    <location>
        <begin position="1"/>
        <end position="105"/>
    </location>
</feature>
<feature type="domain" description="Thioredoxin" evidence="2">
    <location>
        <begin position="1"/>
        <end position="105"/>
    </location>
</feature>
<feature type="disulfide bond" description="Redox-active" evidence="2">
    <location>
        <begin position="30"/>
        <end position="33"/>
    </location>
</feature>
<dbReference type="EMBL" id="AE006914">
    <property type="protein sequence ID" value="AAL02540.1"/>
    <property type="molecule type" value="Genomic_DNA"/>
</dbReference>
<dbReference type="PIR" id="B97700">
    <property type="entry name" value="B97700"/>
</dbReference>
<dbReference type="RefSeq" id="WP_004997015.1">
    <property type="nucleotide sequence ID" value="NC_003103.1"/>
</dbReference>
<dbReference type="SMR" id="Q92JR5"/>
<dbReference type="GeneID" id="95361751"/>
<dbReference type="KEGG" id="rco:RC0002"/>
<dbReference type="HOGENOM" id="CLU_090389_10_2_5"/>
<dbReference type="Proteomes" id="UP000000816">
    <property type="component" value="Chromosome"/>
</dbReference>
<dbReference type="GO" id="GO:0005737">
    <property type="term" value="C:cytoplasm"/>
    <property type="evidence" value="ECO:0007669"/>
    <property type="project" value="TreeGrafter"/>
</dbReference>
<dbReference type="GO" id="GO:0015035">
    <property type="term" value="F:protein-disulfide reductase activity"/>
    <property type="evidence" value="ECO:0007669"/>
    <property type="project" value="InterPro"/>
</dbReference>
<dbReference type="CDD" id="cd02947">
    <property type="entry name" value="TRX_family"/>
    <property type="match status" value="1"/>
</dbReference>
<dbReference type="FunFam" id="3.40.30.10:FF:000001">
    <property type="entry name" value="Thioredoxin"/>
    <property type="match status" value="1"/>
</dbReference>
<dbReference type="Gene3D" id="3.40.30.10">
    <property type="entry name" value="Glutaredoxin"/>
    <property type="match status" value="1"/>
</dbReference>
<dbReference type="InterPro" id="IPR005746">
    <property type="entry name" value="Thioredoxin"/>
</dbReference>
<dbReference type="InterPro" id="IPR036249">
    <property type="entry name" value="Thioredoxin-like_sf"/>
</dbReference>
<dbReference type="InterPro" id="IPR017937">
    <property type="entry name" value="Thioredoxin_CS"/>
</dbReference>
<dbReference type="InterPro" id="IPR013766">
    <property type="entry name" value="Thioredoxin_domain"/>
</dbReference>
<dbReference type="NCBIfam" id="TIGR01068">
    <property type="entry name" value="thioredoxin"/>
    <property type="match status" value="1"/>
</dbReference>
<dbReference type="PANTHER" id="PTHR45663">
    <property type="entry name" value="GEO12009P1"/>
    <property type="match status" value="1"/>
</dbReference>
<dbReference type="PANTHER" id="PTHR45663:SF11">
    <property type="entry name" value="GEO12009P1"/>
    <property type="match status" value="1"/>
</dbReference>
<dbReference type="Pfam" id="PF00085">
    <property type="entry name" value="Thioredoxin"/>
    <property type="match status" value="1"/>
</dbReference>
<dbReference type="PIRSF" id="PIRSF000077">
    <property type="entry name" value="Thioredoxin"/>
    <property type="match status" value="1"/>
</dbReference>
<dbReference type="PRINTS" id="PR00421">
    <property type="entry name" value="THIOREDOXIN"/>
</dbReference>
<dbReference type="SUPFAM" id="SSF52833">
    <property type="entry name" value="Thioredoxin-like"/>
    <property type="match status" value="1"/>
</dbReference>
<dbReference type="PROSITE" id="PS00194">
    <property type="entry name" value="THIOREDOXIN_1"/>
    <property type="match status" value="1"/>
</dbReference>
<dbReference type="PROSITE" id="PS51352">
    <property type="entry name" value="THIOREDOXIN_2"/>
    <property type="match status" value="1"/>
</dbReference>
<reference key="1">
    <citation type="journal article" date="2001" name="Science">
        <title>Mechanisms of evolution in Rickettsia conorii and R. prowazekii.</title>
        <authorList>
            <person name="Ogata H."/>
            <person name="Audic S."/>
            <person name="Renesto-Audiffren P."/>
            <person name="Fournier P.-E."/>
            <person name="Barbe V."/>
            <person name="Samson D."/>
            <person name="Roux V."/>
            <person name="Cossart P."/>
            <person name="Weissenbach J."/>
            <person name="Claverie J.-M."/>
            <person name="Raoult D."/>
        </authorList>
    </citation>
    <scope>NUCLEOTIDE SEQUENCE [LARGE SCALE GENOMIC DNA]</scope>
    <source>
        <strain>ATCC VR-613 / Malish 7</strain>
    </source>
</reference>
<proteinExistence type="inferred from homology"/>